<accession>P01658</accession>
<keyword id="KW-1064">Adaptive immunity</keyword>
<keyword id="KW-0086">Bence-Jones protein</keyword>
<keyword id="KW-0903">Direct protein sequencing</keyword>
<keyword id="KW-1015">Disulfide bond</keyword>
<keyword id="KW-0391">Immunity</keyword>
<keyword id="KW-1280">Immunoglobulin</keyword>
<keyword id="KW-1185">Reference proteome</keyword>
<keyword id="KW-0732">Signal</keyword>
<name>KV3A6_MOUSE</name>
<sequence length="132" mass="14525">METDTLLLWVLLLWVPGSTGDIVLTQSPASLAVSLGQRATISCRASKSVNTYGNSFMZWYZZKPGZPPKLLIYRASNLZSGIPARFSGSGSRTBFTLTIBPVZABDVATYFCZZSBZBPWTFGSGTKLEIKR</sequence>
<protein>
    <recommendedName>
        <fullName>Ig kappa chain V-III region MOPC 321</fullName>
    </recommendedName>
</protein>
<dbReference type="PIR" id="A90412">
    <property type="entry name" value="KVMS32"/>
</dbReference>
<dbReference type="FunCoup" id="P01658">
    <property type="interactions" value="784"/>
</dbReference>
<dbReference type="jPOST" id="P01658"/>
<dbReference type="InParanoid" id="P01658"/>
<dbReference type="Proteomes" id="UP000000589">
    <property type="component" value="Unplaced"/>
</dbReference>
<dbReference type="RNAct" id="P01658">
    <property type="molecule type" value="protein"/>
</dbReference>
<dbReference type="GO" id="GO:0019814">
    <property type="term" value="C:immunoglobulin complex"/>
    <property type="evidence" value="ECO:0000318"/>
    <property type="project" value="GO_Central"/>
</dbReference>
<dbReference type="GO" id="GO:0002250">
    <property type="term" value="P:adaptive immune response"/>
    <property type="evidence" value="ECO:0007669"/>
    <property type="project" value="UniProtKB-KW"/>
</dbReference>
<dbReference type="GO" id="GO:0006955">
    <property type="term" value="P:immune response"/>
    <property type="evidence" value="ECO:0000318"/>
    <property type="project" value="GO_Central"/>
</dbReference>
<dbReference type="CDD" id="cd04980">
    <property type="entry name" value="IgV_L_kappa"/>
    <property type="match status" value="1"/>
</dbReference>
<dbReference type="FunFam" id="2.60.40.10:FF:000350">
    <property type="entry name" value="Immunoglobulin kappa chain variable 18-36"/>
    <property type="match status" value="1"/>
</dbReference>
<dbReference type="Gene3D" id="2.60.40.10">
    <property type="entry name" value="Immunoglobulins"/>
    <property type="match status" value="1"/>
</dbReference>
<dbReference type="InterPro" id="IPR007110">
    <property type="entry name" value="Ig-like_dom"/>
</dbReference>
<dbReference type="InterPro" id="IPR036179">
    <property type="entry name" value="Ig-like_dom_sf"/>
</dbReference>
<dbReference type="InterPro" id="IPR013783">
    <property type="entry name" value="Ig-like_fold"/>
</dbReference>
<dbReference type="InterPro" id="IPR003599">
    <property type="entry name" value="Ig_sub"/>
</dbReference>
<dbReference type="InterPro" id="IPR013106">
    <property type="entry name" value="Ig_V-set"/>
</dbReference>
<dbReference type="InterPro" id="IPR050150">
    <property type="entry name" value="IgV_Light_Chain"/>
</dbReference>
<dbReference type="PANTHER" id="PTHR23267">
    <property type="entry name" value="IMMUNOGLOBULIN LIGHT CHAIN"/>
    <property type="match status" value="1"/>
</dbReference>
<dbReference type="Pfam" id="PF07686">
    <property type="entry name" value="V-set"/>
    <property type="match status" value="1"/>
</dbReference>
<dbReference type="SMART" id="SM00409">
    <property type="entry name" value="IG"/>
    <property type="match status" value="1"/>
</dbReference>
<dbReference type="SMART" id="SM00406">
    <property type="entry name" value="IGv"/>
    <property type="match status" value="1"/>
</dbReference>
<dbReference type="SUPFAM" id="SSF48726">
    <property type="entry name" value="Immunoglobulin"/>
    <property type="match status" value="1"/>
</dbReference>
<dbReference type="PROSITE" id="PS50835">
    <property type="entry name" value="IG_LIKE"/>
    <property type="match status" value="1"/>
</dbReference>
<organism>
    <name type="scientific">Mus musculus</name>
    <name type="common">Mouse</name>
    <dbReference type="NCBI Taxonomy" id="10090"/>
    <lineage>
        <taxon>Eukaryota</taxon>
        <taxon>Metazoa</taxon>
        <taxon>Chordata</taxon>
        <taxon>Craniata</taxon>
        <taxon>Vertebrata</taxon>
        <taxon>Euteleostomi</taxon>
        <taxon>Mammalia</taxon>
        <taxon>Eutheria</taxon>
        <taxon>Euarchontoglires</taxon>
        <taxon>Glires</taxon>
        <taxon>Rodentia</taxon>
        <taxon>Myomorpha</taxon>
        <taxon>Muroidea</taxon>
        <taxon>Muridae</taxon>
        <taxon>Murinae</taxon>
        <taxon>Mus</taxon>
        <taxon>Mus</taxon>
    </lineage>
</organism>
<comment type="miscellaneous">
    <text>The partial sequence of the C region of this Bence-Jones protein was also determined. It differs from that reported for mouse MOPC 21 only in the transposition of two nearby residues.</text>
</comment>
<evidence type="ECO:0000255" key="1">
    <source>
        <dbReference type="PROSITE-ProRule" id="PRU00114"/>
    </source>
</evidence>
<evidence type="ECO:0000269" key="2">
    <source>
    </source>
</evidence>
<proteinExistence type="evidence at protein level"/>
<reference key="1">
    <citation type="journal article" date="1978" name="Biochemistry">
        <title>Primary structures of N-terminal extra peptide segments linked to the variable and constant regions of immunoglobulin light chain precursors: implications on the organization and controlled expression of immunoglobulin genes.</title>
        <authorList>
            <person name="Burstein Y."/>
            <person name="Schechter I."/>
        </authorList>
    </citation>
    <scope>PROTEIN SEQUENCE OF 1-37 (PRECURSOR PROTEIN)</scope>
</reference>
<reference key="2">
    <citation type="journal article" date="1973" name="Biochemistry">
        <title>Mouse immunoglobulin chains. Partial amino acid sequence of a kappa chain.</title>
        <authorList>
            <person name="McKean D.J."/>
            <person name="Potter M."/>
            <person name="Hood L.E."/>
        </authorList>
    </citation>
    <scope>PROTEIN SEQUENCE OF 21-132</scope>
</reference>
<feature type="signal peptide" evidence="2">
    <location>
        <begin position="1"/>
        <end position="20"/>
    </location>
</feature>
<feature type="chain" id="PRO_0000015186" description="Ig kappa chain V-III region MOPC 321">
    <location>
        <begin position="21"/>
        <end position="132"/>
    </location>
</feature>
<feature type="region of interest" description="Framework-1">
    <location>
        <begin position="21"/>
        <end position="43"/>
    </location>
</feature>
<feature type="region of interest" description="Complementarity-determining-1">
    <location>
        <begin position="44"/>
        <end position="58"/>
    </location>
</feature>
<feature type="region of interest" description="Framework-2">
    <location>
        <begin position="59"/>
        <end position="73"/>
    </location>
</feature>
<feature type="region of interest" description="Complementarity-determining-2">
    <location>
        <begin position="74"/>
        <end position="80"/>
    </location>
</feature>
<feature type="region of interest" description="Framework-3">
    <location>
        <begin position="81"/>
        <end position="112"/>
    </location>
</feature>
<feature type="region of interest" description="Complementarity-determining-3">
    <location>
        <begin position="113"/>
        <end position="121"/>
    </location>
</feature>
<feature type="region of interest" description="Framework-4">
    <location>
        <begin position="122"/>
        <end position="131"/>
    </location>
</feature>
<feature type="disulfide bond" evidence="1">
    <location>
        <begin position="43"/>
        <end position="112"/>
    </location>
</feature>
<feature type="non-terminal residue">
    <location>
        <position position="132"/>
    </location>
</feature>